<evidence type="ECO:0000255" key="1">
    <source>
        <dbReference type="HAMAP-Rule" id="MF_00227"/>
    </source>
</evidence>
<organism>
    <name type="scientific">Sodalis glossinidius (strain morsitans)</name>
    <dbReference type="NCBI Taxonomy" id="343509"/>
    <lineage>
        <taxon>Bacteria</taxon>
        <taxon>Pseudomonadati</taxon>
        <taxon>Pseudomonadota</taxon>
        <taxon>Gammaproteobacteria</taxon>
        <taxon>Enterobacterales</taxon>
        <taxon>Bruguierivoracaceae</taxon>
        <taxon>Sodalis</taxon>
    </lineage>
</organism>
<dbReference type="EC" id="3.1.26.5" evidence="1"/>
<dbReference type="EMBL" id="AP008232">
    <property type="protein sequence ID" value="BAE75706.1"/>
    <property type="molecule type" value="Genomic_DNA"/>
</dbReference>
<dbReference type="RefSeq" id="WP_011412236.1">
    <property type="nucleotide sequence ID" value="NC_007712.1"/>
</dbReference>
<dbReference type="SMR" id="Q2NQ69"/>
<dbReference type="STRING" id="343509.SG2431"/>
<dbReference type="KEGG" id="sgl:SG2431"/>
<dbReference type="eggNOG" id="COG0594">
    <property type="taxonomic scope" value="Bacteria"/>
</dbReference>
<dbReference type="HOGENOM" id="CLU_117179_11_0_6"/>
<dbReference type="OrthoDB" id="9796422at2"/>
<dbReference type="BioCyc" id="SGLO343509:SGP1_RS22055-MONOMER"/>
<dbReference type="Proteomes" id="UP000001932">
    <property type="component" value="Chromosome"/>
</dbReference>
<dbReference type="GO" id="GO:0030677">
    <property type="term" value="C:ribonuclease P complex"/>
    <property type="evidence" value="ECO:0007669"/>
    <property type="project" value="TreeGrafter"/>
</dbReference>
<dbReference type="GO" id="GO:0042781">
    <property type="term" value="F:3'-tRNA processing endoribonuclease activity"/>
    <property type="evidence" value="ECO:0007669"/>
    <property type="project" value="TreeGrafter"/>
</dbReference>
<dbReference type="GO" id="GO:0004526">
    <property type="term" value="F:ribonuclease P activity"/>
    <property type="evidence" value="ECO:0007669"/>
    <property type="project" value="UniProtKB-UniRule"/>
</dbReference>
<dbReference type="GO" id="GO:0000049">
    <property type="term" value="F:tRNA binding"/>
    <property type="evidence" value="ECO:0007669"/>
    <property type="project" value="UniProtKB-UniRule"/>
</dbReference>
<dbReference type="GO" id="GO:0001682">
    <property type="term" value="P:tRNA 5'-leader removal"/>
    <property type="evidence" value="ECO:0007669"/>
    <property type="project" value="UniProtKB-UniRule"/>
</dbReference>
<dbReference type="FunFam" id="3.30.230.10:FF:000016">
    <property type="entry name" value="Ribonuclease P protein component"/>
    <property type="match status" value="1"/>
</dbReference>
<dbReference type="Gene3D" id="3.30.230.10">
    <property type="match status" value="1"/>
</dbReference>
<dbReference type="HAMAP" id="MF_00227">
    <property type="entry name" value="RNase_P"/>
    <property type="match status" value="1"/>
</dbReference>
<dbReference type="InterPro" id="IPR020568">
    <property type="entry name" value="Ribosomal_Su5_D2-typ_SF"/>
</dbReference>
<dbReference type="InterPro" id="IPR014721">
    <property type="entry name" value="Ribsml_uS5_D2-typ_fold_subgr"/>
</dbReference>
<dbReference type="InterPro" id="IPR000100">
    <property type="entry name" value="RNase_P"/>
</dbReference>
<dbReference type="InterPro" id="IPR020539">
    <property type="entry name" value="RNase_P_CS"/>
</dbReference>
<dbReference type="NCBIfam" id="TIGR00188">
    <property type="entry name" value="rnpA"/>
    <property type="match status" value="1"/>
</dbReference>
<dbReference type="PANTHER" id="PTHR33992">
    <property type="entry name" value="RIBONUCLEASE P PROTEIN COMPONENT"/>
    <property type="match status" value="1"/>
</dbReference>
<dbReference type="PANTHER" id="PTHR33992:SF1">
    <property type="entry name" value="RIBONUCLEASE P PROTEIN COMPONENT"/>
    <property type="match status" value="1"/>
</dbReference>
<dbReference type="Pfam" id="PF00825">
    <property type="entry name" value="Ribonuclease_P"/>
    <property type="match status" value="1"/>
</dbReference>
<dbReference type="SUPFAM" id="SSF54211">
    <property type="entry name" value="Ribosomal protein S5 domain 2-like"/>
    <property type="match status" value="1"/>
</dbReference>
<dbReference type="PROSITE" id="PS00648">
    <property type="entry name" value="RIBONUCLEASE_P"/>
    <property type="match status" value="1"/>
</dbReference>
<comment type="function">
    <text evidence="1">RNaseP catalyzes the removal of the 5'-leader sequence from pre-tRNA to produce the mature 5'-terminus. It can also cleave other RNA substrates such as 4.5S RNA. The protein component plays an auxiliary but essential role in vivo by binding to the 5'-leader sequence and broadening the substrate specificity of the ribozyme.</text>
</comment>
<comment type="catalytic activity">
    <reaction evidence="1">
        <text>Endonucleolytic cleavage of RNA, removing 5'-extranucleotides from tRNA precursor.</text>
        <dbReference type="EC" id="3.1.26.5"/>
    </reaction>
</comment>
<comment type="subunit">
    <text evidence="1">Consists of a catalytic RNA component (M1 or rnpB) and a protein subunit.</text>
</comment>
<comment type="similarity">
    <text evidence="1">Belongs to the RnpA family.</text>
</comment>
<gene>
    <name evidence="1" type="primary">rnpA</name>
    <name type="ordered locus">SG2431</name>
</gene>
<proteinExistence type="inferred from homology"/>
<feature type="chain" id="PRO_1000021468" description="Ribonuclease P protein component">
    <location>
        <begin position="1"/>
        <end position="119"/>
    </location>
</feature>
<keyword id="KW-0255">Endonuclease</keyword>
<keyword id="KW-0378">Hydrolase</keyword>
<keyword id="KW-0540">Nuclease</keyword>
<keyword id="KW-0694">RNA-binding</keyword>
<keyword id="KW-0819">tRNA processing</keyword>
<accession>Q2NQ69</accession>
<reference key="1">
    <citation type="journal article" date="2006" name="Genome Res.">
        <title>Massive genome erosion and functional adaptations provide insights into the symbiotic lifestyle of Sodalis glossinidius in the tsetse host.</title>
        <authorList>
            <person name="Toh H."/>
            <person name="Weiss B.L."/>
            <person name="Perkin S.A.H."/>
            <person name="Yamashita A."/>
            <person name="Oshima K."/>
            <person name="Hattori M."/>
            <person name="Aksoy S."/>
        </authorList>
    </citation>
    <scope>NUCLEOTIDE SEQUENCE [LARGE SCALE GENOMIC DNA]</scope>
    <source>
        <strain>morsitans</strain>
    </source>
</reference>
<sequence>MVKLAFPRELRLLTPNHFTFVFQQPQWAGTPHVTILGRLNTLGHPRVGLTVAKKHVKRAHERNRIKRLTRESFRLHQHALPTMDFVVIAKKGVADLDNHTLTEALEKLWRRHCRQSQSC</sequence>
<name>RNPA_SODGM</name>
<protein>
    <recommendedName>
        <fullName evidence="1">Ribonuclease P protein component</fullName>
        <shortName evidence="1">RNase P protein</shortName>
        <shortName evidence="1">RNaseP protein</shortName>
        <ecNumber evidence="1">3.1.26.5</ecNumber>
    </recommendedName>
    <alternativeName>
        <fullName evidence="1">Protein C5</fullName>
    </alternativeName>
</protein>